<feature type="signal peptide" evidence="1">
    <location>
        <begin position="1"/>
        <end position="46"/>
    </location>
</feature>
<feature type="chain" id="PRO_0000046088" description="Iron-regulated surface determinant protein A">
    <location>
        <begin position="47"/>
        <end position="316"/>
    </location>
</feature>
<feature type="propeptide" id="PRO_0000046089" description="Removed by sortase A" evidence="5">
    <location>
        <begin position="317"/>
        <end position="350"/>
    </location>
</feature>
<feature type="domain" description="NEAT" evidence="4">
    <location>
        <begin position="62"/>
        <end position="184"/>
    </location>
</feature>
<feature type="region of interest" description="Disordered" evidence="6">
    <location>
        <begin position="188"/>
        <end position="314"/>
    </location>
</feature>
<feature type="short sequence motif" description="LPXTG sorting signal" evidence="5">
    <location>
        <begin position="313"/>
        <end position="317"/>
    </location>
</feature>
<feature type="compositionally biased region" description="Low complexity" evidence="6">
    <location>
        <begin position="203"/>
        <end position="214"/>
    </location>
</feature>
<feature type="compositionally biased region" description="Polar residues" evidence="6">
    <location>
        <begin position="252"/>
        <end position="268"/>
    </location>
</feature>
<feature type="compositionally biased region" description="Polar residues" evidence="6">
    <location>
        <begin position="278"/>
        <end position="296"/>
    </location>
</feature>
<feature type="compositionally biased region" description="Basic and acidic residues" evidence="6">
    <location>
        <begin position="299"/>
        <end position="314"/>
    </location>
</feature>
<feature type="binding site" evidence="1">
    <location>
        <position position="75"/>
    </location>
    <ligand>
        <name>heme</name>
        <dbReference type="ChEBI" id="CHEBI:30413"/>
    </ligand>
</feature>
<feature type="binding site" evidence="1">
    <location>
        <position position="82"/>
    </location>
    <ligand>
        <name>heme</name>
        <dbReference type="ChEBI" id="CHEBI:30413"/>
    </ligand>
</feature>
<feature type="binding site" description="axial binding residue" evidence="8">
    <location>
        <position position="166"/>
    </location>
    <ligand>
        <name>heme</name>
        <dbReference type="ChEBI" id="CHEBI:30413"/>
    </ligand>
    <ligandPart>
        <name>Fe</name>
        <dbReference type="ChEBI" id="CHEBI:18248"/>
    </ligandPart>
</feature>
<feature type="modified residue" description="Pentaglycyl murein peptidoglycan amidated threonine" evidence="5">
    <location>
        <position position="316"/>
    </location>
</feature>
<feature type="mutagenesis site" description="Impaired heme transfer." evidence="8">
    <original>Y</original>
    <variation>A</variation>
    <location>
        <position position="166"/>
    </location>
</feature>
<feature type="mutagenesis site" description="Impaired heme transfer." evidence="8">
    <original>Y</original>
    <variation>F</variation>
    <location>
        <position position="166"/>
    </location>
</feature>
<feature type="strand" evidence="10">
    <location>
        <begin position="62"/>
        <end position="69"/>
    </location>
</feature>
<feature type="strand" evidence="10">
    <location>
        <begin position="71"/>
        <end position="75"/>
    </location>
</feature>
<feature type="strand" evidence="10">
    <location>
        <begin position="78"/>
        <end position="81"/>
    </location>
</feature>
<feature type="helix" evidence="10">
    <location>
        <begin position="83"/>
        <end position="87"/>
    </location>
</feature>
<feature type="strand" evidence="10">
    <location>
        <begin position="90"/>
        <end position="97"/>
    </location>
</feature>
<feature type="strand" evidence="10">
    <location>
        <begin position="100"/>
        <end position="109"/>
    </location>
</feature>
<feature type="helix" evidence="10">
    <location>
        <begin position="110"/>
        <end position="112"/>
    </location>
</feature>
<feature type="strand" evidence="10">
    <location>
        <begin position="113"/>
        <end position="119"/>
    </location>
</feature>
<feature type="strand" evidence="10">
    <location>
        <begin position="128"/>
        <end position="134"/>
    </location>
</feature>
<feature type="turn" evidence="10">
    <location>
        <begin position="135"/>
        <end position="138"/>
    </location>
</feature>
<feature type="strand" evidence="10">
    <location>
        <begin position="139"/>
        <end position="146"/>
    </location>
</feature>
<feature type="strand" evidence="10">
    <location>
        <begin position="152"/>
        <end position="161"/>
    </location>
</feature>
<feature type="helix" evidence="10">
    <location>
        <begin position="162"/>
        <end position="164"/>
    </location>
</feature>
<feature type="strand" evidence="10">
    <location>
        <begin position="166"/>
        <end position="178"/>
    </location>
</feature>
<keyword id="KW-0002">3D-structure</keyword>
<keyword id="KW-0134">Cell wall</keyword>
<keyword id="KW-0349">Heme</keyword>
<keyword id="KW-0408">Iron</keyword>
<keyword id="KW-0479">Metal-binding</keyword>
<keyword id="KW-0572">Peptidoglycan-anchor</keyword>
<keyword id="KW-0964">Secreted</keyword>
<keyword id="KW-0732">Signal</keyword>
<organism>
    <name type="scientific">Staphylococcus aureus (strain N315)</name>
    <dbReference type="NCBI Taxonomy" id="158879"/>
    <lineage>
        <taxon>Bacteria</taxon>
        <taxon>Bacillati</taxon>
        <taxon>Bacillota</taxon>
        <taxon>Bacilli</taxon>
        <taxon>Bacillales</taxon>
        <taxon>Staphylococcaceae</taxon>
        <taxon>Staphylococcus</taxon>
    </lineage>
</organism>
<name>ISDA_STAAN</name>
<dbReference type="EMBL" id="BA000018">
    <property type="protein sequence ID" value="BAB42226.1"/>
    <property type="molecule type" value="Genomic_DNA"/>
</dbReference>
<dbReference type="PIR" id="F89883">
    <property type="entry name" value="F89883"/>
</dbReference>
<dbReference type="RefSeq" id="WP_000160859.1">
    <property type="nucleotide sequence ID" value="NC_002745.2"/>
</dbReference>
<dbReference type="PDB" id="3QZL">
    <property type="method" value="X-ray"/>
    <property type="resolution" value="1.30 A"/>
    <property type="chains" value="A=62-184"/>
</dbReference>
<dbReference type="PDB" id="3QZM">
    <property type="method" value="X-ray"/>
    <property type="resolution" value="1.25 A"/>
    <property type="chains" value="A/B=62-184"/>
</dbReference>
<dbReference type="PDB" id="3QZN">
    <property type="method" value="X-ray"/>
    <property type="resolution" value="2.00 A"/>
    <property type="chains" value="A/B/C=62-184"/>
</dbReference>
<dbReference type="PDB" id="3QZO">
    <property type="method" value="X-ray"/>
    <property type="resolution" value="1.95 A"/>
    <property type="chains" value="A/B/C/D=62-184"/>
</dbReference>
<dbReference type="PDB" id="3QZP">
    <property type="method" value="X-ray"/>
    <property type="resolution" value="1.90 A"/>
    <property type="chains" value="A/B=62-184"/>
</dbReference>
<dbReference type="PDBsum" id="3QZL"/>
<dbReference type="PDBsum" id="3QZM"/>
<dbReference type="PDBsum" id="3QZN"/>
<dbReference type="PDBsum" id="3QZO"/>
<dbReference type="PDBsum" id="3QZP"/>
<dbReference type="SMR" id="Q7A655"/>
<dbReference type="EnsemblBacteria" id="BAB42226">
    <property type="protein sequence ID" value="BAB42226"/>
    <property type="gene ID" value="BAB42226"/>
</dbReference>
<dbReference type="KEGG" id="sau:SA0977"/>
<dbReference type="HOGENOM" id="CLU_068057_0_0_9"/>
<dbReference type="EvolutionaryTrace" id="Q7A655"/>
<dbReference type="PRO" id="PR:Q7A655"/>
<dbReference type="GO" id="GO:0005576">
    <property type="term" value="C:extracellular region"/>
    <property type="evidence" value="ECO:0007669"/>
    <property type="project" value="UniProtKB-KW"/>
</dbReference>
<dbReference type="GO" id="GO:0046872">
    <property type="term" value="F:metal ion binding"/>
    <property type="evidence" value="ECO:0007669"/>
    <property type="project" value="UniProtKB-KW"/>
</dbReference>
<dbReference type="CDD" id="cd06920">
    <property type="entry name" value="NEAT"/>
    <property type="match status" value="1"/>
</dbReference>
<dbReference type="Gene3D" id="2.60.40.1850">
    <property type="match status" value="1"/>
</dbReference>
<dbReference type="InterPro" id="IPR050436">
    <property type="entry name" value="IsdA"/>
</dbReference>
<dbReference type="InterPro" id="IPR019931">
    <property type="entry name" value="LPXTG_anchor"/>
</dbReference>
<dbReference type="InterPro" id="IPR006635">
    <property type="entry name" value="NEAT_dom"/>
</dbReference>
<dbReference type="InterPro" id="IPR037250">
    <property type="entry name" value="NEAT_dom_sf"/>
</dbReference>
<dbReference type="NCBIfam" id="TIGR01167">
    <property type="entry name" value="LPXTG_anchor"/>
    <property type="match status" value="1"/>
</dbReference>
<dbReference type="PANTHER" id="PTHR37824">
    <property type="entry name" value="IRON-REGULATED SURFACE DETERMINANT PROTEIN C"/>
    <property type="match status" value="1"/>
</dbReference>
<dbReference type="PANTHER" id="PTHR37824:SF1">
    <property type="entry name" value="IRON-REGULATED SURFACE DETERMINANT PROTEIN C"/>
    <property type="match status" value="1"/>
</dbReference>
<dbReference type="Pfam" id="PF00746">
    <property type="entry name" value="Gram_pos_anchor"/>
    <property type="match status" value="1"/>
</dbReference>
<dbReference type="Pfam" id="PF05031">
    <property type="entry name" value="NEAT"/>
    <property type="match status" value="1"/>
</dbReference>
<dbReference type="SMART" id="SM00725">
    <property type="entry name" value="NEAT"/>
    <property type="match status" value="1"/>
</dbReference>
<dbReference type="SUPFAM" id="SSF158911">
    <property type="entry name" value="NEAT domain-like"/>
    <property type="match status" value="1"/>
</dbReference>
<dbReference type="PROSITE" id="PS50847">
    <property type="entry name" value="GRAM_POS_ANCHORING"/>
    <property type="match status" value="1"/>
</dbReference>
<dbReference type="PROSITE" id="PS50978">
    <property type="entry name" value="NEAT"/>
    <property type="match status" value="1"/>
</dbReference>
<reference key="1">
    <citation type="journal article" date="2001" name="Lancet">
        <title>Whole genome sequencing of meticillin-resistant Staphylococcus aureus.</title>
        <authorList>
            <person name="Kuroda M."/>
            <person name="Ohta T."/>
            <person name="Uchiyama I."/>
            <person name="Baba T."/>
            <person name="Yuzawa H."/>
            <person name="Kobayashi I."/>
            <person name="Cui L."/>
            <person name="Oguchi A."/>
            <person name="Aoki K."/>
            <person name="Nagai Y."/>
            <person name="Lian J.-Q."/>
            <person name="Ito T."/>
            <person name="Kanamori M."/>
            <person name="Matsumaru H."/>
            <person name="Maruyama A."/>
            <person name="Murakami H."/>
            <person name="Hosoyama A."/>
            <person name="Mizutani-Ui Y."/>
            <person name="Takahashi N.K."/>
            <person name="Sawano T."/>
            <person name="Inoue R."/>
            <person name="Kaito C."/>
            <person name="Sekimizu K."/>
            <person name="Hirakawa H."/>
            <person name="Kuhara S."/>
            <person name="Goto S."/>
            <person name="Yabuzaki J."/>
            <person name="Kanehisa M."/>
            <person name="Yamashita A."/>
            <person name="Oshima K."/>
            <person name="Furuya K."/>
            <person name="Yoshino C."/>
            <person name="Shiba T."/>
            <person name="Hattori M."/>
            <person name="Ogasawara N."/>
            <person name="Hayashi H."/>
            <person name="Hiramatsu K."/>
        </authorList>
    </citation>
    <scope>NUCLEOTIDE SEQUENCE [LARGE SCALE GENOMIC DNA]</scope>
    <source>
        <strain>N315</strain>
    </source>
</reference>
<reference key="2">
    <citation type="journal article" date="2006" name="Proc. Natl. Acad. Sci. U.S.A.">
        <title>Vaccine assembly from surface proteins of Staphylococcus aureus.</title>
        <authorList>
            <person name="Stranger-Jones Y.K."/>
            <person name="Bae T."/>
            <person name="Schneewind O."/>
        </authorList>
    </citation>
    <scope>BIOTECHNOLOGY</scope>
</reference>
<reference key="3">
    <citation type="submission" date="2007-10" db="UniProtKB">
        <title>Shotgun proteomic analysis of total and membrane protein extracts of S. aureus strain N315.</title>
        <authorList>
            <person name="Vaezzadeh A.R."/>
            <person name="Deshusses J."/>
            <person name="Lescuyer P."/>
            <person name="Hochstrasser D.F."/>
        </authorList>
    </citation>
    <scope>IDENTIFICATION BY MASS SPECTROMETRY [LARGE SCALE ANALYSIS]</scope>
    <source>
        <strain>N315</strain>
    </source>
</reference>
<reference key="4">
    <citation type="journal article" date="2011" name="J. Mol. Biol.">
        <title>Iron-coordinating tyrosine is a key determinant of NEAT domain heme transfer.</title>
        <authorList>
            <person name="Grigg J.C."/>
            <person name="Mao C.X."/>
            <person name="Murphy M.E."/>
        </authorList>
    </citation>
    <scope>X-RAY CRYSTALLOGRAPHY (1.25 ANGSTROMS) OF 62-184 IN COMPLEX WITH HEME</scope>
    <scope>MUTAGENESIS OF TYR-166</scope>
</reference>
<gene>
    <name type="primary">isdA</name>
    <name type="synonym">frpA</name>
    <name type="synonym">stbA</name>
    <name type="ordered locus">SA0977</name>
</gene>
<proteinExistence type="evidence at protein level"/>
<sequence length="350" mass="38746">MTKHYLNSKYQSEQRSSAMKKITMGTASIILGSLVYIGADSQQVNAATEATNATNNQSTQVSQATSQPINFQVQKDGSSEKSHMDDYMQHPGKVIKQNNKYYFQTVLNNASFWKEYKFYNANNQELATTVVNDNKKADTRTINVAVEPGYKSLTTKVHIVVPQINYNHRYTTHLEFEKAIPTLADAAKPNNVKPVQPKPAQPKTPTEQTKPVQPKVEKVKPTVTTTSKVEDNHSTKVVSTDTTKDQTKTQTAHTVKTAQTAQEQNKVQTPVKDVATAKSESNNQAVSDNKSQQTNKVTKHNETPKQASKAKELPKTGLTSVDNFISTVAFATLALLGSLSLLLFKRKESK</sequence>
<accession>Q7A655</accession>
<protein>
    <recommendedName>
        <fullName>Iron-regulated surface determinant protein A</fullName>
    </recommendedName>
    <alternativeName>
        <fullName>Fur-regulated protein A</fullName>
    </alternativeName>
    <alternativeName>
        <fullName>Staphylococcal transferrin-binding protein A</fullName>
    </alternativeName>
</protein>
<evidence type="ECO:0000250" key="1"/>
<evidence type="ECO:0000250" key="2">
    <source>
        <dbReference type="UniProtKB" id="A6QG31"/>
    </source>
</evidence>
<evidence type="ECO:0000250" key="3">
    <source>
        <dbReference type="UniProtKB" id="Q7A152"/>
    </source>
</evidence>
<evidence type="ECO:0000255" key="4">
    <source>
        <dbReference type="PROSITE-ProRule" id="PRU00337"/>
    </source>
</evidence>
<evidence type="ECO:0000255" key="5">
    <source>
        <dbReference type="PROSITE-ProRule" id="PRU00477"/>
    </source>
</evidence>
<evidence type="ECO:0000256" key="6">
    <source>
        <dbReference type="SAM" id="MobiDB-lite"/>
    </source>
</evidence>
<evidence type="ECO:0000269" key="7">
    <source>
    </source>
</evidence>
<evidence type="ECO:0000269" key="8">
    <source>
    </source>
</evidence>
<evidence type="ECO:0000305" key="9"/>
<evidence type="ECO:0007829" key="10">
    <source>
        <dbReference type="PDB" id="3QZM"/>
    </source>
</evidence>
<comment type="function">
    <text evidence="2 3">Cell wall-anchored surface receptor that participates in the extraction of heme from oxidized methemoglobin/metHb to enable growth on hemoglobin as a sole iron source (By similarity). Receives heme from IsdB and transfers it to IsdC (By similarity). Also plays a role in the inhibition of host immune response. Protects S.aureus against the bactericidal protease activity of apolactoferrin. Decreases bacterial cellular hydrophobicity, which renders S.aureus resistant to bactericidal human skin fatty acids as well as to beta-defensins and cathelicidin. Also binds fibronectin and chains B-beta and gamma of fibrinogen, promoting clumping of S.aureus with fibrinogen. Involved in adherence of S.aureus to human desquamated nasal epithelial cells and is required for nasal colonization (By similarity).</text>
</comment>
<comment type="subunit">
    <text evidence="2 3">Monomer. Interacts with IsdC (By similarity). Interacts with IsdB (By similarity).</text>
</comment>
<comment type="subcellular location">
    <subcellularLocation>
        <location evidence="2">Secreted</location>
        <location evidence="2">Cell wall</location>
        <topology evidence="2">Peptidoglycan-anchor</topology>
    </subcellularLocation>
    <text evidence="2">Encodes an LPXTG motif-containing sorting signal that targets to the cell wall, which is catalyzed by sortase A.</text>
</comment>
<comment type="induction">
    <text evidence="1">Repressed by fur in the presence of iron.</text>
</comment>
<comment type="domain">
    <text evidence="1">The NEAT domain is responsible for binding Fe(3+) and Fe(2+) heme and fibrinogen. The NEAT domain is an inhibitor of apolactoferrin activity, while the C-domain confers resistance to bovine lactoferricin (By similarity).</text>
</comment>
<comment type="biotechnology">
    <text evidence="7">A combined vaccine containing IsdA, IsdB, SdrD and SdrE afforded significant protection in mice against a lethal challenge with S.aureus Newman or any of the clinical isolates NRS252, N315, NRS248, USA100 and USA400. The immune response elicited by the combined vaccine is greater than the one elicited by its individual components.</text>
</comment>
<comment type="similarity">
    <text evidence="9">Belongs to the IsdA family.</text>
</comment>